<keyword id="KW-1185">Reference proteome</keyword>
<keyword id="KW-0687">Ribonucleoprotein</keyword>
<keyword id="KW-0689">Ribosomal protein</keyword>
<keyword id="KW-0694">RNA-binding</keyword>
<keyword id="KW-0699">rRNA-binding</keyword>
<name>RS7_METJA</name>
<organism>
    <name type="scientific">Methanocaldococcus jannaschii (strain ATCC 43067 / DSM 2661 / JAL-1 / JCM 10045 / NBRC 100440)</name>
    <name type="common">Methanococcus jannaschii</name>
    <dbReference type="NCBI Taxonomy" id="243232"/>
    <lineage>
        <taxon>Archaea</taxon>
        <taxon>Methanobacteriati</taxon>
        <taxon>Methanobacteriota</taxon>
        <taxon>Methanomada group</taxon>
        <taxon>Methanococci</taxon>
        <taxon>Methanococcales</taxon>
        <taxon>Methanocaldococcaceae</taxon>
        <taxon>Methanocaldococcus</taxon>
    </lineage>
</organism>
<accession>P54063</accession>
<comment type="function">
    <text evidence="1">One of the primary rRNA binding proteins, it binds directly to 16S rRNA where it nucleates assembly of the head domain of the 30S subunit. Is located at the subunit interface close to the decoding center.</text>
</comment>
<comment type="subunit">
    <text evidence="1">Part of the 30S ribosomal subunit.</text>
</comment>
<comment type="similarity">
    <text evidence="1">Belongs to the universal ribosomal protein uS7 family.</text>
</comment>
<dbReference type="EMBL" id="L77117">
    <property type="protein sequence ID" value="AAB99051.1"/>
    <property type="molecule type" value="Genomic_DNA"/>
</dbReference>
<dbReference type="PIR" id="F64430">
    <property type="entry name" value="F64430"/>
</dbReference>
<dbReference type="RefSeq" id="WP_010870560.1">
    <property type="nucleotide sequence ID" value="NC_000909.1"/>
</dbReference>
<dbReference type="SMR" id="P54063"/>
<dbReference type="FunCoup" id="P54063">
    <property type="interactions" value="187"/>
</dbReference>
<dbReference type="STRING" id="243232.MJ_1047"/>
<dbReference type="PaxDb" id="243232-MJ_1047"/>
<dbReference type="EnsemblBacteria" id="AAB99051">
    <property type="protein sequence ID" value="AAB99051"/>
    <property type="gene ID" value="MJ_1047"/>
</dbReference>
<dbReference type="GeneID" id="1451944"/>
<dbReference type="KEGG" id="mja:MJ_1047"/>
<dbReference type="eggNOG" id="arCOG04254">
    <property type="taxonomic scope" value="Archaea"/>
</dbReference>
<dbReference type="HOGENOM" id="CLU_063975_0_0_2"/>
<dbReference type="InParanoid" id="P54063"/>
<dbReference type="OrthoDB" id="45346at2157"/>
<dbReference type="PhylomeDB" id="P54063"/>
<dbReference type="Proteomes" id="UP000000805">
    <property type="component" value="Chromosome"/>
</dbReference>
<dbReference type="GO" id="GO:0022627">
    <property type="term" value="C:cytosolic small ribosomal subunit"/>
    <property type="evidence" value="ECO:0000318"/>
    <property type="project" value="GO_Central"/>
</dbReference>
<dbReference type="GO" id="GO:0005840">
    <property type="term" value="C:ribosome"/>
    <property type="evidence" value="ECO:0000318"/>
    <property type="project" value="GO_Central"/>
</dbReference>
<dbReference type="GO" id="GO:0003729">
    <property type="term" value="F:mRNA binding"/>
    <property type="evidence" value="ECO:0000318"/>
    <property type="project" value="GO_Central"/>
</dbReference>
<dbReference type="GO" id="GO:0019843">
    <property type="term" value="F:rRNA binding"/>
    <property type="evidence" value="ECO:0000318"/>
    <property type="project" value="GO_Central"/>
</dbReference>
<dbReference type="GO" id="GO:0003735">
    <property type="term" value="F:structural constituent of ribosome"/>
    <property type="evidence" value="ECO:0000318"/>
    <property type="project" value="GO_Central"/>
</dbReference>
<dbReference type="GO" id="GO:0000028">
    <property type="term" value="P:ribosomal small subunit assembly"/>
    <property type="evidence" value="ECO:0000318"/>
    <property type="project" value="GO_Central"/>
</dbReference>
<dbReference type="GO" id="GO:0006412">
    <property type="term" value="P:translation"/>
    <property type="evidence" value="ECO:0000318"/>
    <property type="project" value="GO_Central"/>
</dbReference>
<dbReference type="CDD" id="cd14867">
    <property type="entry name" value="uS7_Eukaryote"/>
    <property type="match status" value="1"/>
</dbReference>
<dbReference type="FunFam" id="1.10.455.10:FF:000011">
    <property type="entry name" value="30S ribosomal protein S7"/>
    <property type="match status" value="1"/>
</dbReference>
<dbReference type="Gene3D" id="1.10.455.10">
    <property type="entry name" value="Ribosomal protein S7 domain"/>
    <property type="match status" value="1"/>
</dbReference>
<dbReference type="HAMAP" id="MF_00480_A">
    <property type="entry name" value="Ribosomal_uS7_A"/>
    <property type="match status" value="1"/>
</dbReference>
<dbReference type="InterPro" id="IPR000235">
    <property type="entry name" value="Ribosomal_uS7"/>
</dbReference>
<dbReference type="InterPro" id="IPR026018">
    <property type="entry name" value="Ribosomal_uS7_arc"/>
</dbReference>
<dbReference type="InterPro" id="IPR020606">
    <property type="entry name" value="Ribosomal_uS7_CS"/>
</dbReference>
<dbReference type="InterPro" id="IPR023798">
    <property type="entry name" value="Ribosomal_uS7_dom"/>
</dbReference>
<dbReference type="InterPro" id="IPR036823">
    <property type="entry name" value="Ribosomal_uS7_dom_sf"/>
</dbReference>
<dbReference type="InterPro" id="IPR005716">
    <property type="entry name" value="Ribosomal_uS7_euk/arc"/>
</dbReference>
<dbReference type="NCBIfam" id="NF003106">
    <property type="entry name" value="PRK04027.1"/>
    <property type="match status" value="1"/>
</dbReference>
<dbReference type="NCBIfam" id="TIGR01028">
    <property type="entry name" value="uS7_euk_arch"/>
    <property type="match status" value="1"/>
</dbReference>
<dbReference type="PANTHER" id="PTHR11205">
    <property type="entry name" value="RIBOSOMAL PROTEIN S7"/>
    <property type="match status" value="1"/>
</dbReference>
<dbReference type="Pfam" id="PF00177">
    <property type="entry name" value="Ribosomal_S7"/>
    <property type="match status" value="1"/>
</dbReference>
<dbReference type="PIRSF" id="PIRSF002122">
    <property type="entry name" value="RPS7p_RPS7a_RPS5e_RPS7o"/>
    <property type="match status" value="1"/>
</dbReference>
<dbReference type="SUPFAM" id="SSF47973">
    <property type="entry name" value="Ribosomal protein S7"/>
    <property type="match status" value="1"/>
</dbReference>
<dbReference type="PROSITE" id="PS00052">
    <property type="entry name" value="RIBOSOMAL_S7"/>
    <property type="match status" value="1"/>
</dbReference>
<evidence type="ECO:0000255" key="1">
    <source>
        <dbReference type="HAMAP-Rule" id="MF_00480"/>
    </source>
</evidence>
<evidence type="ECO:0000305" key="2"/>
<sequence>MELDEIKVFGRWSTKDVVVKDPGLRNYINLTPIYVPHTAGRYTKRQFEKAKMNIVERLVNKVMRREENTGKKLKALKIVENAFEIIEKRTKQNPIQVLVDAIENAGPREDTTRISYGGIVYLQSVDCSSLRRIDVALRNIALGAYMAAHKSKKPIEEALAEEIIAAARGDMQKSYAVRKKEETERVAQSAR</sequence>
<reference key="1">
    <citation type="journal article" date="1996" name="Science">
        <title>Complete genome sequence of the methanogenic archaeon, Methanococcus jannaschii.</title>
        <authorList>
            <person name="Bult C.J."/>
            <person name="White O."/>
            <person name="Olsen G.J."/>
            <person name="Zhou L."/>
            <person name="Fleischmann R.D."/>
            <person name="Sutton G.G."/>
            <person name="Blake J.A."/>
            <person name="FitzGerald L.M."/>
            <person name="Clayton R.A."/>
            <person name="Gocayne J.D."/>
            <person name="Kerlavage A.R."/>
            <person name="Dougherty B.A."/>
            <person name="Tomb J.-F."/>
            <person name="Adams M.D."/>
            <person name="Reich C.I."/>
            <person name="Overbeek R."/>
            <person name="Kirkness E.F."/>
            <person name="Weinstock K.G."/>
            <person name="Merrick J.M."/>
            <person name="Glodek A."/>
            <person name="Scott J.L."/>
            <person name="Geoghagen N.S.M."/>
            <person name="Weidman J.F."/>
            <person name="Fuhrmann J.L."/>
            <person name="Nguyen D."/>
            <person name="Utterback T.R."/>
            <person name="Kelley J.M."/>
            <person name="Peterson J.D."/>
            <person name="Sadow P.W."/>
            <person name="Hanna M.C."/>
            <person name="Cotton M.D."/>
            <person name="Roberts K.M."/>
            <person name="Hurst M.A."/>
            <person name="Kaine B.P."/>
            <person name="Borodovsky M."/>
            <person name="Klenk H.-P."/>
            <person name="Fraser C.M."/>
            <person name="Smith H.O."/>
            <person name="Woese C.R."/>
            <person name="Venter J.C."/>
        </authorList>
    </citation>
    <scope>NUCLEOTIDE SEQUENCE [LARGE SCALE GENOMIC DNA]</scope>
    <source>
        <strain>ATCC 43067 / DSM 2661 / JAL-1 / JCM 10045 / NBRC 100440</strain>
    </source>
</reference>
<feature type="chain" id="PRO_0000124399" description="Small ribosomal subunit protein uS7">
    <location>
        <begin position="1"/>
        <end position="191"/>
    </location>
</feature>
<proteinExistence type="inferred from homology"/>
<gene>
    <name evidence="1" type="primary">rps7</name>
    <name type="ordered locus">MJ1047</name>
</gene>
<protein>
    <recommendedName>
        <fullName evidence="1">Small ribosomal subunit protein uS7</fullName>
    </recommendedName>
    <alternativeName>
        <fullName evidence="2">30S ribosomal protein S7</fullName>
    </alternativeName>
</protein>